<proteinExistence type="inferred from homology"/>
<reference key="1">
    <citation type="submission" date="2007-10" db="EMBL/GenBank/DDBJ databases">
        <title>Complete sequence of chromosome of Desulforudis audaxviator MP104C.</title>
        <authorList>
            <person name="Copeland A."/>
            <person name="Lucas S."/>
            <person name="Lapidus A."/>
            <person name="Barry K."/>
            <person name="Glavina del Rio T."/>
            <person name="Dalin E."/>
            <person name="Tice H."/>
            <person name="Bruce D."/>
            <person name="Pitluck S."/>
            <person name="Lowry S.R."/>
            <person name="Larimer F."/>
            <person name="Land M.L."/>
            <person name="Hauser L."/>
            <person name="Kyrpides N."/>
            <person name="Ivanova N.N."/>
            <person name="Richardson P."/>
        </authorList>
    </citation>
    <scope>NUCLEOTIDE SEQUENCE [LARGE SCALE GENOMIC DNA]</scope>
    <source>
        <strain>MP104C</strain>
    </source>
</reference>
<name>AROA_DESAP</name>
<accession>B1I3Z0</accession>
<sequence>MTLKITPARGLRGEAWVPGDKSISHRVVMLGSLARGETAATNFLPGEDCLATVRCFRALGVEIEGPDGDTIRIRGRGPEALTEAPDVLDAGNSGTTMRLMLGILAGQPFFSVITGDASLRRRPMGRVTGPLQEMGATILGRRNANLAPIAVAGGRLSGIRYRLPVASAQLKSALLLAGLFADSPTEVTEPVATRDHTERMLAAFGALVARRGSSVTVAPSPELCGREIRIPGDISSAAFFIVAALITPESDLVLKDVGVNPTRTGILDALANMGARISVSRPRESGGEPVADIRVRSSALRGTVIEGALIPRLVDEIPVLAVAAAYADGETVIRDAAELRVKESDRLAATRKELSTLGADIRETPDGLVIRGPRRLTGGSCNSHGDHRIAMAAAVAGLAASDVTIIRDSNCIDVSFPGFAHALNSLRLE</sequence>
<keyword id="KW-0028">Amino-acid biosynthesis</keyword>
<keyword id="KW-0057">Aromatic amino acid biosynthesis</keyword>
<keyword id="KW-0963">Cytoplasm</keyword>
<keyword id="KW-1185">Reference proteome</keyword>
<keyword id="KW-0808">Transferase</keyword>
<evidence type="ECO:0000255" key="1">
    <source>
        <dbReference type="HAMAP-Rule" id="MF_00210"/>
    </source>
</evidence>
<gene>
    <name evidence="1" type="primary">aroA</name>
    <name type="ordered locus">Daud_1181</name>
</gene>
<comment type="function">
    <text evidence="1">Catalyzes the transfer of the enolpyruvyl moiety of phosphoenolpyruvate (PEP) to the 5-hydroxyl of shikimate-3-phosphate (S3P) to produce enolpyruvyl shikimate-3-phosphate and inorganic phosphate.</text>
</comment>
<comment type="catalytic activity">
    <reaction evidence="1">
        <text>3-phosphoshikimate + phosphoenolpyruvate = 5-O-(1-carboxyvinyl)-3-phosphoshikimate + phosphate</text>
        <dbReference type="Rhea" id="RHEA:21256"/>
        <dbReference type="ChEBI" id="CHEBI:43474"/>
        <dbReference type="ChEBI" id="CHEBI:57701"/>
        <dbReference type="ChEBI" id="CHEBI:58702"/>
        <dbReference type="ChEBI" id="CHEBI:145989"/>
        <dbReference type="EC" id="2.5.1.19"/>
    </reaction>
    <physiologicalReaction direction="left-to-right" evidence="1">
        <dbReference type="Rhea" id="RHEA:21257"/>
    </physiologicalReaction>
</comment>
<comment type="pathway">
    <text evidence="1">Metabolic intermediate biosynthesis; chorismate biosynthesis; chorismate from D-erythrose 4-phosphate and phosphoenolpyruvate: step 6/7.</text>
</comment>
<comment type="subunit">
    <text evidence="1">Monomer.</text>
</comment>
<comment type="subcellular location">
    <subcellularLocation>
        <location evidence="1">Cytoplasm</location>
    </subcellularLocation>
</comment>
<comment type="similarity">
    <text evidence="1">Belongs to the EPSP synthase family.</text>
</comment>
<dbReference type="EC" id="2.5.1.19" evidence="1"/>
<dbReference type="EMBL" id="CP000860">
    <property type="protein sequence ID" value="ACA59692.1"/>
    <property type="molecule type" value="Genomic_DNA"/>
</dbReference>
<dbReference type="RefSeq" id="WP_012302278.1">
    <property type="nucleotide sequence ID" value="NC_010424.1"/>
</dbReference>
<dbReference type="SMR" id="B1I3Z0"/>
<dbReference type="STRING" id="477974.Daud_1181"/>
<dbReference type="KEGG" id="dau:Daud_1181"/>
<dbReference type="eggNOG" id="COG0128">
    <property type="taxonomic scope" value="Bacteria"/>
</dbReference>
<dbReference type="HOGENOM" id="CLU_024321_0_1_9"/>
<dbReference type="OrthoDB" id="9809920at2"/>
<dbReference type="UniPathway" id="UPA00053">
    <property type="reaction ID" value="UER00089"/>
</dbReference>
<dbReference type="Proteomes" id="UP000008544">
    <property type="component" value="Chromosome"/>
</dbReference>
<dbReference type="GO" id="GO:0005737">
    <property type="term" value="C:cytoplasm"/>
    <property type="evidence" value="ECO:0007669"/>
    <property type="project" value="UniProtKB-SubCell"/>
</dbReference>
<dbReference type="GO" id="GO:0003866">
    <property type="term" value="F:3-phosphoshikimate 1-carboxyvinyltransferase activity"/>
    <property type="evidence" value="ECO:0007669"/>
    <property type="project" value="UniProtKB-UniRule"/>
</dbReference>
<dbReference type="GO" id="GO:0008652">
    <property type="term" value="P:amino acid biosynthetic process"/>
    <property type="evidence" value="ECO:0007669"/>
    <property type="project" value="UniProtKB-KW"/>
</dbReference>
<dbReference type="GO" id="GO:0009073">
    <property type="term" value="P:aromatic amino acid family biosynthetic process"/>
    <property type="evidence" value="ECO:0007669"/>
    <property type="project" value="UniProtKB-KW"/>
</dbReference>
<dbReference type="GO" id="GO:0009423">
    <property type="term" value="P:chorismate biosynthetic process"/>
    <property type="evidence" value="ECO:0007669"/>
    <property type="project" value="UniProtKB-UniRule"/>
</dbReference>
<dbReference type="CDD" id="cd01556">
    <property type="entry name" value="EPSP_synthase"/>
    <property type="match status" value="1"/>
</dbReference>
<dbReference type="FunFam" id="3.65.10.10:FF:000005">
    <property type="entry name" value="3-phosphoshikimate 1-carboxyvinyltransferase"/>
    <property type="match status" value="1"/>
</dbReference>
<dbReference type="FunFam" id="3.65.10.10:FF:000006">
    <property type="entry name" value="3-phosphoshikimate 1-carboxyvinyltransferase"/>
    <property type="match status" value="1"/>
</dbReference>
<dbReference type="Gene3D" id="3.65.10.10">
    <property type="entry name" value="Enolpyruvate transferase domain"/>
    <property type="match status" value="2"/>
</dbReference>
<dbReference type="HAMAP" id="MF_00210">
    <property type="entry name" value="EPSP_synth"/>
    <property type="match status" value="1"/>
</dbReference>
<dbReference type="InterPro" id="IPR001986">
    <property type="entry name" value="Enolpyruvate_Tfrase_dom"/>
</dbReference>
<dbReference type="InterPro" id="IPR036968">
    <property type="entry name" value="Enolpyruvate_Tfrase_sf"/>
</dbReference>
<dbReference type="InterPro" id="IPR006264">
    <property type="entry name" value="EPSP_synthase"/>
</dbReference>
<dbReference type="InterPro" id="IPR023193">
    <property type="entry name" value="EPSP_synthase_CS"/>
</dbReference>
<dbReference type="InterPro" id="IPR013792">
    <property type="entry name" value="RNA3'P_cycl/enolpyr_Trfase_a/b"/>
</dbReference>
<dbReference type="NCBIfam" id="TIGR01356">
    <property type="entry name" value="aroA"/>
    <property type="match status" value="1"/>
</dbReference>
<dbReference type="PANTHER" id="PTHR21090">
    <property type="entry name" value="AROM/DEHYDROQUINATE SYNTHASE"/>
    <property type="match status" value="1"/>
</dbReference>
<dbReference type="PANTHER" id="PTHR21090:SF5">
    <property type="entry name" value="PENTAFUNCTIONAL AROM POLYPEPTIDE"/>
    <property type="match status" value="1"/>
</dbReference>
<dbReference type="Pfam" id="PF00275">
    <property type="entry name" value="EPSP_synthase"/>
    <property type="match status" value="1"/>
</dbReference>
<dbReference type="PIRSF" id="PIRSF000505">
    <property type="entry name" value="EPSPS"/>
    <property type="match status" value="1"/>
</dbReference>
<dbReference type="SUPFAM" id="SSF55205">
    <property type="entry name" value="EPT/RTPC-like"/>
    <property type="match status" value="1"/>
</dbReference>
<dbReference type="PROSITE" id="PS00104">
    <property type="entry name" value="EPSP_SYNTHASE_1"/>
    <property type="match status" value="1"/>
</dbReference>
<dbReference type="PROSITE" id="PS00885">
    <property type="entry name" value="EPSP_SYNTHASE_2"/>
    <property type="match status" value="1"/>
</dbReference>
<organism>
    <name type="scientific">Desulforudis audaxviator (strain MP104C)</name>
    <dbReference type="NCBI Taxonomy" id="477974"/>
    <lineage>
        <taxon>Bacteria</taxon>
        <taxon>Bacillati</taxon>
        <taxon>Bacillota</taxon>
        <taxon>Clostridia</taxon>
        <taxon>Thermoanaerobacterales</taxon>
        <taxon>Candidatus Desulforudaceae</taxon>
        <taxon>Candidatus Desulforudis</taxon>
    </lineage>
</organism>
<protein>
    <recommendedName>
        <fullName evidence="1">3-phosphoshikimate 1-carboxyvinyltransferase</fullName>
        <ecNumber evidence="1">2.5.1.19</ecNumber>
    </recommendedName>
    <alternativeName>
        <fullName evidence="1">5-enolpyruvylshikimate-3-phosphate synthase</fullName>
        <shortName evidence="1">EPSP synthase</shortName>
        <shortName evidence="1">EPSPS</shortName>
    </alternativeName>
</protein>
<feature type="chain" id="PRO_1000099698" description="3-phosphoshikimate 1-carboxyvinyltransferase">
    <location>
        <begin position="1"/>
        <end position="429"/>
    </location>
</feature>
<feature type="active site" description="Proton acceptor" evidence="1">
    <location>
        <position position="315"/>
    </location>
</feature>
<feature type="binding site" evidence="1">
    <location>
        <position position="21"/>
    </location>
    <ligand>
        <name>3-phosphoshikimate</name>
        <dbReference type="ChEBI" id="CHEBI:145989"/>
    </ligand>
</feature>
<feature type="binding site" evidence="1">
    <location>
        <position position="21"/>
    </location>
    <ligand>
        <name>phosphoenolpyruvate</name>
        <dbReference type="ChEBI" id="CHEBI:58702"/>
    </ligand>
</feature>
<feature type="binding site" evidence="1">
    <location>
        <position position="22"/>
    </location>
    <ligand>
        <name>3-phosphoshikimate</name>
        <dbReference type="ChEBI" id="CHEBI:145989"/>
    </ligand>
</feature>
<feature type="binding site" evidence="1">
    <location>
        <position position="26"/>
    </location>
    <ligand>
        <name>3-phosphoshikimate</name>
        <dbReference type="ChEBI" id="CHEBI:145989"/>
    </ligand>
</feature>
<feature type="binding site" evidence="1">
    <location>
        <position position="94"/>
    </location>
    <ligand>
        <name>phosphoenolpyruvate</name>
        <dbReference type="ChEBI" id="CHEBI:58702"/>
    </ligand>
</feature>
<feature type="binding site" evidence="1">
    <location>
        <position position="122"/>
    </location>
    <ligand>
        <name>phosphoenolpyruvate</name>
        <dbReference type="ChEBI" id="CHEBI:58702"/>
    </ligand>
</feature>
<feature type="binding site" evidence="1">
    <location>
        <position position="167"/>
    </location>
    <ligand>
        <name>3-phosphoshikimate</name>
        <dbReference type="ChEBI" id="CHEBI:145989"/>
    </ligand>
</feature>
<feature type="binding site" evidence="1">
    <location>
        <position position="169"/>
    </location>
    <ligand>
        <name>3-phosphoshikimate</name>
        <dbReference type="ChEBI" id="CHEBI:145989"/>
    </ligand>
</feature>
<feature type="binding site" evidence="1">
    <location>
        <position position="169"/>
    </location>
    <ligand>
        <name>phosphoenolpyruvate</name>
        <dbReference type="ChEBI" id="CHEBI:58702"/>
    </ligand>
</feature>
<feature type="binding site" evidence="1">
    <location>
        <position position="315"/>
    </location>
    <ligand>
        <name>3-phosphoshikimate</name>
        <dbReference type="ChEBI" id="CHEBI:145989"/>
    </ligand>
</feature>
<feature type="binding site" evidence="1">
    <location>
        <position position="342"/>
    </location>
    <ligand>
        <name>3-phosphoshikimate</name>
        <dbReference type="ChEBI" id="CHEBI:145989"/>
    </ligand>
</feature>
<feature type="binding site" evidence="1">
    <location>
        <position position="346"/>
    </location>
    <ligand>
        <name>phosphoenolpyruvate</name>
        <dbReference type="ChEBI" id="CHEBI:58702"/>
    </ligand>
</feature>
<feature type="binding site" evidence="1">
    <location>
        <position position="388"/>
    </location>
    <ligand>
        <name>phosphoenolpyruvate</name>
        <dbReference type="ChEBI" id="CHEBI:58702"/>
    </ligand>
</feature>